<organism>
    <name type="scientific">Chlamydia caviae (strain ATCC VR-813 / DSM 19441 / 03DC25 / GPIC)</name>
    <name type="common">Chlamydophila caviae</name>
    <dbReference type="NCBI Taxonomy" id="227941"/>
    <lineage>
        <taxon>Bacteria</taxon>
        <taxon>Pseudomonadati</taxon>
        <taxon>Chlamydiota</taxon>
        <taxon>Chlamydiia</taxon>
        <taxon>Chlamydiales</taxon>
        <taxon>Chlamydiaceae</taxon>
        <taxon>Chlamydia/Chlamydophila group</taxon>
        <taxon>Chlamydia</taxon>
    </lineage>
</organism>
<accession>Q823F3</accession>
<comment type="function">
    <text evidence="1">One of several proteins that assist in the late maturation steps of the functional core of the 30S ribosomal subunit. Associates with free 30S ribosomal subunits (but not with 30S subunits that are part of 70S ribosomes or polysomes). Required for efficient processing of 16S rRNA. May interact with the 5'-terminal helix region of 16S rRNA.</text>
</comment>
<comment type="subunit">
    <text evidence="1">Monomer. Binds 30S ribosomal subunits, but not 50S ribosomal subunits or 70S ribosomes.</text>
</comment>
<comment type="subcellular location">
    <subcellularLocation>
        <location evidence="1">Cytoplasm</location>
    </subcellularLocation>
</comment>
<comment type="similarity">
    <text evidence="1">Belongs to the RbfA family.</text>
</comment>
<proteinExistence type="inferred from homology"/>
<evidence type="ECO:0000255" key="1">
    <source>
        <dbReference type="HAMAP-Rule" id="MF_00003"/>
    </source>
</evidence>
<keyword id="KW-0963">Cytoplasm</keyword>
<keyword id="KW-0690">Ribosome biogenesis</keyword>
<dbReference type="EMBL" id="AE015925">
    <property type="protein sequence ID" value="AAP05209.1"/>
    <property type="molecule type" value="Genomic_DNA"/>
</dbReference>
<dbReference type="RefSeq" id="WP_011006425.1">
    <property type="nucleotide sequence ID" value="NC_003361.3"/>
</dbReference>
<dbReference type="SMR" id="Q823F3"/>
<dbReference type="STRING" id="227941.CCA_00464"/>
<dbReference type="KEGG" id="cca:CCA_00464"/>
<dbReference type="eggNOG" id="COG0858">
    <property type="taxonomic scope" value="Bacteria"/>
</dbReference>
<dbReference type="HOGENOM" id="CLU_089475_6_3_0"/>
<dbReference type="OrthoDB" id="21494at2"/>
<dbReference type="Proteomes" id="UP000002193">
    <property type="component" value="Chromosome"/>
</dbReference>
<dbReference type="GO" id="GO:0005829">
    <property type="term" value="C:cytosol"/>
    <property type="evidence" value="ECO:0007669"/>
    <property type="project" value="TreeGrafter"/>
</dbReference>
<dbReference type="GO" id="GO:0043024">
    <property type="term" value="F:ribosomal small subunit binding"/>
    <property type="evidence" value="ECO:0007669"/>
    <property type="project" value="TreeGrafter"/>
</dbReference>
<dbReference type="GO" id="GO:0030490">
    <property type="term" value="P:maturation of SSU-rRNA"/>
    <property type="evidence" value="ECO:0007669"/>
    <property type="project" value="UniProtKB-UniRule"/>
</dbReference>
<dbReference type="Gene3D" id="3.30.300.20">
    <property type="match status" value="1"/>
</dbReference>
<dbReference type="HAMAP" id="MF_00003">
    <property type="entry name" value="RbfA"/>
    <property type="match status" value="1"/>
</dbReference>
<dbReference type="InterPro" id="IPR015946">
    <property type="entry name" value="KH_dom-like_a/b"/>
</dbReference>
<dbReference type="InterPro" id="IPR000238">
    <property type="entry name" value="RbfA"/>
</dbReference>
<dbReference type="InterPro" id="IPR023799">
    <property type="entry name" value="RbfA_dom_sf"/>
</dbReference>
<dbReference type="NCBIfam" id="TIGR00082">
    <property type="entry name" value="rbfA"/>
    <property type="match status" value="1"/>
</dbReference>
<dbReference type="PANTHER" id="PTHR33515">
    <property type="entry name" value="RIBOSOME-BINDING FACTOR A, CHLOROPLASTIC-RELATED"/>
    <property type="match status" value="1"/>
</dbReference>
<dbReference type="PANTHER" id="PTHR33515:SF1">
    <property type="entry name" value="RIBOSOME-BINDING FACTOR A, CHLOROPLASTIC-RELATED"/>
    <property type="match status" value="1"/>
</dbReference>
<dbReference type="Pfam" id="PF02033">
    <property type="entry name" value="RBFA"/>
    <property type="match status" value="1"/>
</dbReference>
<dbReference type="SUPFAM" id="SSF89919">
    <property type="entry name" value="Ribosome-binding factor A, RbfA"/>
    <property type="match status" value="1"/>
</dbReference>
<gene>
    <name evidence="1" type="primary">rbfA</name>
    <name type="ordered locus">CCA_00464</name>
</gene>
<feature type="chain" id="PRO_0000102643" description="Ribosome-binding factor A">
    <location>
        <begin position="1"/>
        <end position="120"/>
    </location>
</feature>
<protein>
    <recommendedName>
        <fullName evidence="1">Ribosome-binding factor A</fullName>
    </recommendedName>
</protein>
<sequence>MTENRRIKKVNSLLREAIANVILKDVKHPKISNQWITVTRVCLSKDLHSARVYVSIMPHENTSAETLDALKASAGFIAYKASKGVVLKYFPEIHFYIEDIFSPQDHIENLLWKIREQDKN</sequence>
<reference key="1">
    <citation type="journal article" date="2003" name="Nucleic Acids Res.">
        <title>Genome sequence of Chlamydophila caviae (Chlamydia psittaci GPIC): examining the role of niche-specific genes in the evolution of the Chlamydiaceae.</title>
        <authorList>
            <person name="Read T.D."/>
            <person name="Myers G.S.A."/>
            <person name="Brunham R.C."/>
            <person name="Nelson W.C."/>
            <person name="Paulsen I.T."/>
            <person name="Heidelberg J.F."/>
            <person name="Holtzapple E.K."/>
            <person name="Khouri H.M."/>
            <person name="Federova N.B."/>
            <person name="Carty H.A."/>
            <person name="Umayam L.A."/>
            <person name="Haft D.H."/>
            <person name="Peterson J.D."/>
            <person name="Beanan M.J."/>
            <person name="White O."/>
            <person name="Salzberg S.L."/>
            <person name="Hsia R.-C."/>
            <person name="McClarty G."/>
            <person name="Rank R.G."/>
            <person name="Bavoil P.M."/>
            <person name="Fraser C.M."/>
        </authorList>
    </citation>
    <scope>NUCLEOTIDE SEQUENCE [LARGE SCALE GENOMIC DNA]</scope>
    <source>
        <strain>ATCC VR-813 / DSM 19441 / 03DC25 / GPIC</strain>
    </source>
</reference>
<name>RBFA_CHLCV</name>